<comment type="function">
    <text evidence="1">Catalyzes the attachment of isoleucine to tRNA(Ile). As IleRS can inadvertently accommodate and process structurally similar amino acids such as valine, to avoid such errors it has two additional distinct tRNA(Ile)-dependent editing activities. One activity is designated as 'pretransfer' editing and involves the hydrolysis of activated Val-AMP. The other activity is designated 'posttransfer' editing and involves deacylation of mischarged Val-tRNA(Ile).</text>
</comment>
<comment type="catalytic activity">
    <reaction evidence="1">
        <text>tRNA(Ile) + L-isoleucine + ATP = L-isoleucyl-tRNA(Ile) + AMP + diphosphate</text>
        <dbReference type="Rhea" id="RHEA:11060"/>
        <dbReference type="Rhea" id="RHEA-COMP:9666"/>
        <dbReference type="Rhea" id="RHEA-COMP:9695"/>
        <dbReference type="ChEBI" id="CHEBI:30616"/>
        <dbReference type="ChEBI" id="CHEBI:33019"/>
        <dbReference type="ChEBI" id="CHEBI:58045"/>
        <dbReference type="ChEBI" id="CHEBI:78442"/>
        <dbReference type="ChEBI" id="CHEBI:78528"/>
        <dbReference type="ChEBI" id="CHEBI:456215"/>
        <dbReference type="EC" id="6.1.1.5"/>
    </reaction>
</comment>
<comment type="cofactor">
    <cofactor evidence="1">
        <name>Zn(2+)</name>
        <dbReference type="ChEBI" id="CHEBI:29105"/>
    </cofactor>
    <text evidence="1">Binds 1 zinc ion per subunit.</text>
</comment>
<comment type="subunit">
    <text evidence="1">Monomer.</text>
</comment>
<comment type="subcellular location">
    <subcellularLocation>
        <location evidence="1">Cytoplasm</location>
    </subcellularLocation>
</comment>
<comment type="domain">
    <text evidence="1">IleRS has two distinct active sites: one for aminoacylation and one for editing. The misactivated valine is translocated from the active site to the editing site, which sterically excludes the correctly activated isoleucine. The single editing site contains two valyl binding pockets, one specific for each substrate (Val-AMP or Val-tRNA(Ile)).</text>
</comment>
<comment type="similarity">
    <text evidence="1">Belongs to the class-I aminoacyl-tRNA synthetase family. IleS type 1 subfamily.</text>
</comment>
<gene>
    <name evidence="1" type="primary">ileS</name>
    <name type="ordered locus">GSU3136</name>
</gene>
<dbReference type="EC" id="6.1.1.5" evidence="1"/>
<dbReference type="EMBL" id="AE017180">
    <property type="protein sequence ID" value="AAR36527.1"/>
    <property type="molecule type" value="Genomic_DNA"/>
</dbReference>
<dbReference type="RefSeq" id="NP_954177.1">
    <property type="nucleotide sequence ID" value="NC_002939.5"/>
</dbReference>
<dbReference type="RefSeq" id="WP_010943758.1">
    <property type="nucleotide sequence ID" value="NC_002939.5"/>
</dbReference>
<dbReference type="SMR" id="Q747X9"/>
<dbReference type="FunCoup" id="Q747X9">
    <property type="interactions" value="532"/>
</dbReference>
<dbReference type="STRING" id="243231.GSU3136"/>
<dbReference type="EnsemblBacteria" id="AAR36527">
    <property type="protein sequence ID" value="AAR36527"/>
    <property type="gene ID" value="GSU3136"/>
</dbReference>
<dbReference type="KEGG" id="gsu:GSU3136"/>
<dbReference type="PATRIC" id="fig|243231.5.peg.3161"/>
<dbReference type="eggNOG" id="COG0060">
    <property type="taxonomic scope" value="Bacteria"/>
</dbReference>
<dbReference type="HOGENOM" id="CLU_001493_7_1_7"/>
<dbReference type="InParanoid" id="Q747X9"/>
<dbReference type="OrthoDB" id="9810365at2"/>
<dbReference type="Proteomes" id="UP000000577">
    <property type="component" value="Chromosome"/>
</dbReference>
<dbReference type="GO" id="GO:0005829">
    <property type="term" value="C:cytosol"/>
    <property type="evidence" value="ECO:0000318"/>
    <property type="project" value="GO_Central"/>
</dbReference>
<dbReference type="GO" id="GO:0002161">
    <property type="term" value="F:aminoacyl-tRNA deacylase activity"/>
    <property type="evidence" value="ECO:0007669"/>
    <property type="project" value="InterPro"/>
</dbReference>
<dbReference type="GO" id="GO:0005524">
    <property type="term" value="F:ATP binding"/>
    <property type="evidence" value="ECO:0007669"/>
    <property type="project" value="UniProtKB-UniRule"/>
</dbReference>
<dbReference type="GO" id="GO:0004822">
    <property type="term" value="F:isoleucine-tRNA ligase activity"/>
    <property type="evidence" value="ECO:0000318"/>
    <property type="project" value="GO_Central"/>
</dbReference>
<dbReference type="GO" id="GO:0000049">
    <property type="term" value="F:tRNA binding"/>
    <property type="evidence" value="ECO:0007669"/>
    <property type="project" value="InterPro"/>
</dbReference>
<dbReference type="GO" id="GO:0008270">
    <property type="term" value="F:zinc ion binding"/>
    <property type="evidence" value="ECO:0007669"/>
    <property type="project" value="UniProtKB-UniRule"/>
</dbReference>
<dbReference type="GO" id="GO:0006428">
    <property type="term" value="P:isoleucyl-tRNA aminoacylation"/>
    <property type="evidence" value="ECO:0000318"/>
    <property type="project" value="GO_Central"/>
</dbReference>
<dbReference type="CDD" id="cd07960">
    <property type="entry name" value="Anticodon_Ia_Ile_BEm"/>
    <property type="match status" value="1"/>
</dbReference>
<dbReference type="CDD" id="cd00818">
    <property type="entry name" value="IleRS_core"/>
    <property type="match status" value="1"/>
</dbReference>
<dbReference type="FunFam" id="1.10.10.830:FF:000008">
    <property type="entry name" value="Isoleucine--tRNA ligase"/>
    <property type="match status" value="1"/>
</dbReference>
<dbReference type="FunFam" id="1.10.730.20:FF:000001">
    <property type="entry name" value="Isoleucine--tRNA ligase"/>
    <property type="match status" value="1"/>
</dbReference>
<dbReference type="FunFam" id="3.40.50.620:FF:000042">
    <property type="entry name" value="Isoleucine--tRNA ligase"/>
    <property type="match status" value="1"/>
</dbReference>
<dbReference type="FunFam" id="3.90.740.10:FF:000006">
    <property type="entry name" value="Isoleucine--tRNA ligase"/>
    <property type="match status" value="1"/>
</dbReference>
<dbReference type="Gene3D" id="1.10.730.20">
    <property type="match status" value="1"/>
</dbReference>
<dbReference type="Gene3D" id="3.40.50.620">
    <property type="entry name" value="HUPs"/>
    <property type="match status" value="2"/>
</dbReference>
<dbReference type="Gene3D" id="1.10.10.830">
    <property type="entry name" value="Ile-tRNA synthetase CP2 domain-like"/>
    <property type="match status" value="1"/>
</dbReference>
<dbReference type="Gene3D" id="3.90.740.10">
    <property type="entry name" value="Valyl/Leucyl/Isoleucyl-tRNA synthetase, editing domain"/>
    <property type="match status" value="1"/>
</dbReference>
<dbReference type="HAMAP" id="MF_02002">
    <property type="entry name" value="Ile_tRNA_synth_type1"/>
    <property type="match status" value="1"/>
</dbReference>
<dbReference type="InterPro" id="IPR001412">
    <property type="entry name" value="aa-tRNA-synth_I_CS"/>
</dbReference>
<dbReference type="InterPro" id="IPR002300">
    <property type="entry name" value="aa-tRNA-synth_Ia"/>
</dbReference>
<dbReference type="InterPro" id="IPR033708">
    <property type="entry name" value="Anticodon_Ile_BEm"/>
</dbReference>
<dbReference type="InterPro" id="IPR002301">
    <property type="entry name" value="Ile-tRNA-ligase"/>
</dbReference>
<dbReference type="InterPro" id="IPR023585">
    <property type="entry name" value="Ile-tRNA-ligase_type1"/>
</dbReference>
<dbReference type="InterPro" id="IPR050081">
    <property type="entry name" value="Ile-tRNA_ligase"/>
</dbReference>
<dbReference type="InterPro" id="IPR013155">
    <property type="entry name" value="M/V/L/I-tRNA-synth_anticd-bd"/>
</dbReference>
<dbReference type="InterPro" id="IPR014729">
    <property type="entry name" value="Rossmann-like_a/b/a_fold"/>
</dbReference>
<dbReference type="InterPro" id="IPR009080">
    <property type="entry name" value="tRNAsynth_Ia_anticodon-bd"/>
</dbReference>
<dbReference type="InterPro" id="IPR009008">
    <property type="entry name" value="Val/Leu/Ile-tRNA-synth_edit"/>
</dbReference>
<dbReference type="InterPro" id="IPR010663">
    <property type="entry name" value="Znf_FPG/IleRS"/>
</dbReference>
<dbReference type="NCBIfam" id="TIGR00392">
    <property type="entry name" value="ileS"/>
    <property type="match status" value="1"/>
</dbReference>
<dbReference type="PANTHER" id="PTHR42765:SF1">
    <property type="entry name" value="ISOLEUCINE--TRNA LIGASE, MITOCHONDRIAL"/>
    <property type="match status" value="1"/>
</dbReference>
<dbReference type="PANTHER" id="PTHR42765">
    <property type="entry name" value="SOLEUCYL-TRNA SYNTHETASE"/>
    <property type="match status" value="1"/>
</dbReference>
<dbReference type="Pfam" id="PF08264">
    <property type="entry name" value="Anticodon_1"/>
    <property type="match status" value="1"/>
</dbReference>
<dbReference type="Pfam" id="PF00133">
    <property type="entry name" value="tRNA-synt_1"/>
    <property type="match status" value="1"/>
</dbReference>
<dbReference type="Pfam" id="PF06827">
    <property type="entry name" value="zf-FPG_IleRS"/>
    <property type="match status" value="1"/>
</dbReference>
<dbReference type="PRINTS" id="PR00984">
    <property type="entry name" value="TRNASYNTHILE"/>
</dbReference>
<dbReference type="SUPFAM" id="SSF47323">
    <property type="entry name" value="Anticodon-binding domain of a subclass of class I aminoacyl-tRNA synthetases"/>
    <property type="match status" value="1"/>
</dbReference>
<dbReference type="SUPFAM" id="SSF52374">
    <property type="entry name" value="Nucleotidylyl transferase"/>
    <property type="match status" value="1"/>
</dbReference>
<dbReference type="SUPFAM" id="SSF50677">
    <property type="entry name" value="ValRS/IleRS/LeuRS editing domain"/>
    <property type="match status" value="1"/>
</dbReference>
<dbReference type="PROSITE" id="PS00178">
    <property type="entry name" value="AA_TRNA_LIGASE_I"/>
    <property type="match status" value="1"/>
</dbReference>
<accession>Q747X9</accession>
<reference key="1">
    <citation type="journal article" date="2003" name="Science">
        <title>Genome of Geobacter sulfurreducens: metal reduction in subsurface environments.</title>
        <authorList>
            <person name="Methe B.A."/>
            <person name="Nelson K.E."/>
            <person name="Eisen J.A."/>
            <person name="Paulsen I.T."/>
            <person name="Nelson W.C."/>
            <person name="Heidelberg J.F."/>
            <person name="Wu D."/>
            <person name="Wu M."/>
            <person name="Ward N.L."/>
            <person name="Beanan M.J."/>
            <person name="Dodson R.J."/>
            <person name="Madupu R."/>
            <person name="Brinkac L.M."/>
            <person name="Daugherty S.C."/>
            <person name="DeBoy R.T."/>
            <person name="Durkin A.S."/>
            <person name="Gwinn M.L."/>
            <person name="Kolonay J.F."/>
            <person name="Sullivan S.A."/>
            <person name="Haft D.H."/>
            <person name="Selengut J."/>
            <person name="Davidsen T.M."/>
            <person name="Zafar N."/>
            <person name="White O."/>
            <person name="Tran B."/>
            <person name="Romero C."/>
            <person name="Forberger H.A."/>
            <person name="Weidman J.F."/>
            <person name="Khouri H.M."/>
            <person name="Feldblyum T.V."/>
            <person name="Utterback T.R."/>
            <person name="Van Aken S.E."/>
            <person name="Lovley D.R."/>
            <person name="Fraser C.M."/>
        </authorList>
    </citation>
    <scope>NUCLEOTIDE SEQUENCE [LARGE SCALE GENOMIC DNA]</scope>
    <source>
        <strain>ATCC 51573 / DSM 12127 / PCA</strain>
    </source>
</reference>
<name>SYI_GEOSL</name>
<keyword id="KW-0030">Aminoacyl-tRNA synthetase</keyword>
<keyword id="KW-0067">ATP-binding</keyword>
<keyword id="KW-0963">Cytoplasm</keyword>
<keyword id="KW-0436">Ligase</keyword>
<keyword id="KW-0479">Metal-binding</keyword>
<keyword id="KW-0547">Nucleotide-binding</keyword>
<keyword id="KW-0648">Protein biosynthesis</keyword>
<keyword id="KW-1185">Reference proteome</keyword>
<keyword id="KW-0862">Zinc</keyword>
<evidence type="ECO:0000255" key="1">
    <source>
        <dbReference type="HAMAP-Rule" id="MF_02002"/>
    </source>
</evidence>
<organism>
    <name type="scientific">Geobacter sulfurreducens (strain ATCC 51573 / DSM 12127 / PCA)</name>
    <dbReference type="NCBI Taxonomy" id="243231"/>
    <lineage>
        <taxon>Bacteria</taxon>
        <taxon>Pseudomonadati</taxon>
        <taxon>Thermodesulfobacteriota</taxon>
        <taxon>Desulfuromonadia</taxon>
        <taxon>Geobacterales</taxon>
        <taxon>Geobacteraceae</taxon>
        <taxon>Geobacter</taxon>
    </lineage>
</organism>
<sequence length="923" mass="103533">MDYKSTLNLPVTDFPMKANLPQREPEILAAWQQGDLYGTIAKAGKGKPRYVLHDGPPYANGHIHIGHALNKILKDIILKSKRMQGFDAPYVPGWDCHGLPIELQVEKNLGSKKHETTKLQMRKQCREYAEKFVHVQRAEFERLGVLGDWDRPYLTMSYDYEGITARELARFAENGGLYKGKKPVHWCSSCVTALAEAEVEYADKTSPSIYVKFLLQDDIGGAVPALAGKRVSLVIWTTTPWTIPANLAVALHPELDYVALETGGEVLVVAEGLKDAFMAATGVQGDVIATFRADILYRKRCKHPFYDRDSIVLLGEHVTLDAGTGCVHTAPGHGQEDYELALVEGLDIYNPVDNRGRYIQSLEFFGGMFVFDANAAVMEKLREVGALVGQGSVEHSYPHCWRCKKPIIFRATEQWFISMEKNDLRQKALTEIDRVSWVPKWGRERIHGMIENRPDWCISRQRSWGVPITAFYCTECGEILADGKTMHHVADLFMAGGADLWYEKEAAELLPPGTVCPQCGKSAFEKEMDILDVWFDSGVSHAAVLENRPELGSPANMYLEGSDQHRGWFHSSLLASVGTRGVAPYREVLTHGFVVDGSGRKMSKSVGNVVAPEEVIKKYGAEILRLWVAAQDYRDDVRISQEILTRLAEAYRRIRNTCRYLLGNLNDFDPDVDMVPYDRMTELDRWALHQLEVLKEKVAAAYNEYEFHILYHAVNGFCTVEMSAFYLDIIKERYTSRKDAPERRSAQSVMYLVLESLVTLMAPVLSFTADEVWGYMPKRSESSVHLATFPEFRPEWKDESLVERWARIMAVRGDVSKALEQARVQKTIGHSLDAAVTLAAEPGLLSFLQEYAGELSTIFIVSRVDLVEEGAGDYPAAEGVSGLRIGVSAAPGEKCERCWHYDEEIGGDSEHPTLCPKCAAAVK</sequence>
<proteinExistence type="inferred from homology"/>
<protein>
    <recommendedName>
        <fullName evidence="1">Isoleucine--tRNA ligase</fullName>
        <ecNumber evidence="1">6.1.1.5</ecNumber>
    </recommendedName>
    <alternativeName>
        <fullName evidence="1">Isoleucyl-tRNA synthetase</fullName>
        <shortName evidence="1">IleRS</shortName>
    </alternativeName>
</protein>
<feature type="chain" id="PRO_0000098391" description="Isoleucine--tRNA ligase">
    <location>
        <begin position="1"/>
        <end position="923"/>
    </location>
</feature>
<feature type="short sequence motif" description="'HIGH' region">
    <location>
        <begin position="57"/>
        <end position="67"/>
    </location>
</feature>
<feature type="short sequence motif" description="'KMSKS' region">
    <location>
        <begin position="601"/>
        <end position="605"/>
    </location>
</feature>
<feature type="binding site" evidence="1">
    <location>
        <position position="560"/>
    </location>
    <ligand>
        <name>L-isoleucyl-5'-AMP</name>
        <dbReference type="ChEBI" id="CHEBI:178002"/>
    </ligand>
</feature>
<feature type="binding site" evidence="1">
    <location>
        <position position="604"/>
    </location>
    <ligand>
        <name>ATP</name>
        <dbReference type="ChEBI" id="CHEBI:30616"/>
    </ligand>
</feature>
<feature type="binding site" evidence="1">
    <location>
        <position position="895"/>
    </location>
    <ligand>
        <name>Zn(2+)</name>
        <dbReference type="ChEBI" id="CHEBI:29105"/>
    </ligand>
</feature>
<feature type="binding site" evidence="1">
    <location>
        <position position="898"/>
    </location>
    <ligand>
        <name>Zn(2+)</name>
        <dbReference type="ChEBI" id="CHEBI:29105"/>
    </ligand>
</feature>
<feature type="binding site" evidence="1">
    <location>
        <position position="915"/>
    </location>
    <ligand>
        <name>Zn(2+)</name>
        <dbReference type="ChEBI" id="CHEBI:29105"/>
    </ligand>
</feature>
<feature type="binding site" evidence="1">
    <location>
        <position position="918"/>
    </location>
    <ligand>
        <name>Zn(2+)</name>
        <dbReference type="ChEBI" id="CHEBI:29105"/>
    </ligand>
</feature>